<name>T179A_HUMAN</name>
<comment type="subcellular location">
    <subcellularLocation>
        <location evidence="3">Membrane</location>
        <topology evidence="3">Multi-pass membrane protein</topology>
    </subcellularLocation>
</comment>
<comment type="alternative products">
    <event type="alternative splicing"/>
    <isoform>
        <id>Q6ZVK1-1</id>
        <name>1</name>
        <sequence type="displayed"/>
    </isoform>
    <isoform>
        <id>Q6ZVK1-2</id>
        <name>2</name>
        <sequence type="described" ref="VSP_021227 VSP_021228"/>
    </isoform>
</comment>
<comment type="similarity">
    <text evidence="3">Belongs to the TMEM179 family.</text>
</comment>
<accession>Q6ZVK1</accession>
<protein>
    <recommendedName>
        <fullName>Transmembrane protein 179</fullName>
    </recommendedName>
    <alternativeName>
        <fullName>Transmembrane protein 179A</fullName>
    </alternativeName>
</protein>
<keyword id="KW-0025">Alternative splicing</keyword>
<keyword id="KW-0325">Glycoprotein</keyword>
<keyword id="KW-0472">Membrane</keyword>
<keyword id="KW-1267">Proteomics identification</keyword>
<keyword id="KW-1185">Reference proteome</keyword>
<keyword id="KW-0812">Transmembrane</keyword>
<keyword id="KW-1133">Transmembrane helix</keyword>
<sequence length="233" mass="26378">MALNNFLFAQCACYFLAFLFSFVVVVPLSENGHDFRGRCLLFTEGMWLSANLTVQERERFTVQEWGPPAACRFSLLASLLSLLLAAAHAWRTLFFLCKGHEGSFFSAFLNLLVSAFVVFLVFIASTIVSVGFTMWCDTITEKGTVPHSCEELQDIDLELGVDNSAFYDQFAIAQFGLWASWLAWLAITTLAFLKVYHNYRQEDLLDSLIHEKELLLARPSPRTSFQEEKSAVI</sequence>
<organism>
    <name type="scientific">Homo sapiens</name>
    <name type="common">Human</name>
    <dbReference type="NCBI Taxonomy" id="9606"/>
    <lineage>
        <taxon>Eukaryota</taxon>
        <taxon>Metazoa</taxon>
        <taxon>Chordata</taxon>
        <taxon>Craniata</taxon>
        <taxon>Vertebrata</taxon>
        <taxon>Euteleostomi</taxon>
        <taxon>Mammalia</taxon>
        <taxon>Eutheria</taxon>
        <taxon>Euarchontoglires</taxon>
        <taxon>Primates</taxon>
        <taxon>Haplorrhini</taxon>
        <taxon>Catarrhini</taxon>
        <taxon>Hominidae</taxon>
        <taxon>Homo</taxon>
    </lineage>
</organism>
<proteinExistence type="evidence at protein level"/>
<feature type="chain" id="PRO_0000254552" description="Transmembrane protein 179">
    <location>
        <begin position="1"/>
        <end position="233"/>
    </location>
</feature>
<feature type="transmembrane region" description="Helical" evidence="1">
    <location>
        <begin position="6"/>
        <end position="26"/>
    </location>
</feature>
<feature type="transmembrane region" description="Helical" evidence="1">
    <location>
        <begin position="75"/>
        <end position="95"/>
    </location>
</feature>
<feature type="transmembrane region" description="Helical" evidence="1">
    <location>
        <begin position="104"/>
        <end position="124"/>
    </location>
</feature>
<feature type="transmembrane region" description="Helical" evidence="1">
    <location>
        <begin position="170"/>
        <end position="190"/>
    </location>
</feature>
<feature type="glycosylation site" description="N-linked (GlcNAc...) asparagine" evidence="1">
    <location>
        <position position="51"/>
    </location>
</feature>
<feature type="splice variant" id="VSP_021227" description="In isoform 2." evidence="2">
    <original>FGLWASWLAWLAITTLAFLKVYHNYRQE</original>
    <variation>VGGSGQEGRLAMLGGGHLLLDIC</variation>
    <location>
        <begin position="175"/>
        <end position="202"/>
    </location>
</feature>
<feature type="splice variant" id="VSP_021228" description="In isoform 2." evidence="2">
    <location>
        <begin position="203"/>
        <end position="233"/>
    </location>
</feature>
<dbReference type="EMBL" id="AK124477">
    <property type="protein sequence ID" value="BAC85860.1"/>
    <property type="molecule type" value="mRNA"/>
</dbReference>
<dbReference type="EMBL" id="BX927359">
    <property type="status" value="NOT_ANNOTATED_CDS"/>
    <property type="molecule type" value="Genomic_DNA"/>
</dbReference>
<dbReference type="CCDS" id="CCDS66723.1">
    <molecule id="Q6ZVK1-1"/>
</dbReference>
<dbReference type="RefSeq" id="NP_001273318.1">
    <molecule id="Q6ZVK1-1"/>
    <property type="nucleotide sequence ID" value="NM_001286389.2"/>
</dbReference>
<dbReference type="RefSeq" id="NP_001273319.1">
    <property type="nucleotide sequence ID" value="NM_001286390.1"/>
</dbReference>
<dbReference type="FunCoup" id="Q6ZVK1">
    <property type="interactions" value="175"/>
</dbReference>
<dbReference type="STRING" id="9606.ENSP00000450958"/>
<dbReference type="TCDB" id="9.B.201.1.1">
    <property type="family name" value="the 4 tms tmem179 (tmem179) family"/>
</dbReference>
<dbReference type="GlyCosmos" id="Q6ZVK1">
    <property type="glycosylation" value="1 site, No reported glycans"/>
</dbReference>
<dbReference type="GlyGen" id="Q6ZVK1">
    <property type="glycosylation" value="1 site"/>
</dbReference>
<dbReference type="iPTMnet" id="Q6ZVK1"/>
<dbReference type="PhosphoSitePlus" id="Q6ZVK1"/>
<dbReference type="BioMuta" id="TMEM179"/>
<dbReference type="DMDM" id="126229230"/>
<dbReference type="MassIVE" id="Q6ZVK1"/>
<dbReference type="PaxDb" id="9606-ENSP00000450958"/>
<dbReference type="PeptideAtlas" id="Q6ZVK1"/>
<dbReference type="ProteomicsDB" id="68419">
    <molecule id="Q6ZVK1-1"/>
</dbReference>
<dbReference type="Antibodypedia" id="62288">
    <property type="antibodies" value="3 antibodies from 3 providers"/>
</dbReference>
<dbReference type="DNASU" id="388021"/>
<dbReference type="Ensembl" id="ENST00000341595.7">
    <molecule id="Q6ZVK1-2"/>
    <property type="protein sequence ID" value="ENSP00000340477.3"/>
    <property type="gene ID" value="ENSG00000258986.7"/>
</dbReference>
<dbReference type="Ensembl" id="ENST00000556573.6">
    <molecule id="Q6ZVK1-1"/>
    <property type="protein sequence ID" value="ENSP00000450958.1"/>
    <property type="gene ID" value="ENSG00000258986.7"/>
</dbReference>
<dbReference type="Ensembl" id="ENST00000625335.2">
    <molecule id="Q6ZVK1-2"/>
    <property type="protein sequence ID" value="ENSP00000487568.1"/>
    <property type="gene ID" value="ENSG00000276342.4"/>
</dbReference>
<dbReference type="Ensembl" id="ENST00000630378.2">
    <molecule id="Q6ZVK1-1"/>
    <property type="protein sequence ID" value="ENSP00000485891.1"/>
    <property type="gene ID" value="ENSG00000276342.4"/>
</dbReference>
<dbReference type="GeneID" id="388021"/>
<dbReference type="KEGG" id="hsa:388021"/>
<dbReference type="MANE-Select" id="ENST00000556573.6">
    <property type="protein sequence ID" value="ENSP00000450958.1"/>
    <property type="RefSeq nucleotide sequence ID" value="NM_001286389.2"/>
    <property type="RefSeq protein sequence ID" value="NP_001273318.1"/>
</dbReference>
<dbReference type="UCSC" id="uc001yox.3">
    <molecule id="Q6ZVK1-1"/>
    <property type="organism name" value="human"/>
</dbReference>
<dbReference type="AGR" id="HGNC:20137"/>
<dbReference type="CTD" id="388021"/>
<dbReference type="DisGeNET" id="388021"/>
<dbReference type="GeneCards" id="TMEM179"/>
<dbReference type="HGNC" id="HGNC:20137">
    <property type="gene designation" value="TMEM179"/>
</dbReference>
<dbReference type="HPA" id="ENSG00000258986">
    <property type="expression patterns" value="Group enriched (brain, pituitary gland)"/>
</dbReference>
<dbReference type="neXtProt" id="NX_Q6ZVK1"/>
<dbReference type="OpenTargets" id="ENSG00000258986"/>
<dbReference type="PharmGKB" id="PA162405995"/>
<dbReference type="VEuPathDB" id="HostDB:ENSG00000258986"/>
<dbReference type="eggNOG" id="ENOG502QW4U">
    <property type="taxonomic scope" value="Eukaryota"/>
</dbReference>
<dbReference type="GeneTree" id="ENSGT00510000048283"/>
<dbReference type="HOGENOM" id="CLU_103794_0_0_1"/>
<dbReference type="InParanoid" id="Q6ZVK1"/>
<dbReference type="OMA" id="DEFRGHC"/>
<dbReference type="OrthoDB" id="6423876at2759"/>
<dbReference type="PAN-GO" id="Q6ZVK1">
    <property type="GO annotations" value="0 GO annotations based on evolutionary models"/>
</dbReference>
<dbReference type="PhylomeDB" id="Q6ZVK1"/>
<dbReference type="TreeFam" id="TF324841"/>
<dbReference type="PathwayCommons" id="Q6ZVK1"/>
<dbReference type="BioGRID-ORCS" id="388021">
    <property type="hits" value="11 hits in 1134 CRISPR screens"/>
</dbReference>
<dbReference type="ChiTaRS" id="TMEM179">
    <property type="organism name" value="human"/>
</dbReference>
<dbReference type="GenomeRNAi" id="388021"/>
<dbReference type="Pharos" id="Q6ZVK1">
    <property type="development level" value="Tdark"/>
</dbReference>
<dbReference type="PRO" id="PR:Q6ZVK1"/>
<dbReference type="Proteomes" id="UP000005640">
    <property type="component" value="Chromosome 14"/>
</dbReference>
<dbReference type="RNAct" id="Q6ZVK1">
    <property type="molecule type" value="protein"/>
</dbReference>
<dbReference type="Bgee" id="ENSG00000258986">
    <property type="expression patterns" value="Expressed in hypothalamus and 88 other cell types or tissues"/>
</dbReference>
<dbReference type="ExpressionAtlas" id="Q6ZVK1">
    <property type="expression patterns" value="baseline and differential"/>
</dbReference>
<dbReference type="GO" id="GO:0016020">
    <property type="term" value="C:membrane"/>
    <property type="evidence" value="ECO:0007669"/>
    <property type="project" value="UniProtKB-SubCell"/>
</dbReference>
<dbReference type="InterPro" id="IPR029673">
    <property type="entry name" value="TMEM179"/>
</dbReference>
<dbReference type="PANTHER" id="PTHR31872">
    <property type="entry name" value="TRANSMEMBRANE PROTEIN 179"/>
    <property type="match status" value="1"/>
</dbReference>
<dbReference type="PANTHER" id="PTHR31872:SF4">
    <property type="entry name" value="TRANSMEMBRANE PROTEIN 179"/>
    <property type="match status" value="1"/>
</dbReference>
<reference key="1">
    <citation type="journal article" date="2004" name="Nat. Genet.">
        <title>Complete sequencing and characterization of 21,243 full-length human cDNAs.</title>
        <authorList>
            <person name="Ota T."/>
            <person name="Suzuki Y."/>
            <person name="Nishikawa T."/>
            <person name="Otsuki T."/>
            <person name="Sugiyama T."/>
            <person name="Irie R."/>
            <person name="Wakamatsu A."/>
            <person name="Hayashi K."/>
            <person name="Sato H."/>
            <person name="Nagai K."/>
            <person name="Kimura K."/>
            <person name="Makita H."/>
            <person name="Sekine M."/>
            <person name="Obayashi M."/>
            <person name="Nishi T."/>
            <person name="Shibahara T."/>
            <person name="Tanaka T."/>
            <person name="Ishii S."/>
            <person name="Yamamoto J."/>
            <person name="Saito K."/>
            <person name="Kawai Y."/>
            <person name="Isono Y."/>
            <person name="Nakamura Y."/>
            <person name="Nagahari K."/>
            <person name="Murakami K."/>
            <person name="Yasuda T."/>
            <person name="Iwayanagi T."/>
            <person name="Wagatsuma M."/>
            <person name="Shiratori A."/>
            <person name="Sudo H."/>
            <person name="Hosoiri T."/>
            <person name="Kaku Y."/>
            <person name="Kodaira H."/>
            <person name="Kondo H."/>
            <person name="Sugawara M."/>
            <person name="Takahashi M."/>
            <person name="Kanda K."/>
            <person name="Yokoi T."/>
            <person name="Furuya T."/>
            <person name="Kikkawa E."/>
            <person name="Omura Y."/>
            <person name="Abe K."/>
            <person name="Kamihara K."/>
            <person name="Katsuta N."/>
            <person name="Sato K."/>
            <person name="Tanikawa M."/>
            <person name="Yamazaki M."/>
            <person name="Ninomiya K."/>
            <person name="Ishibashi T."/>
            <person name="Yamashita H."/>
            <person name="Murakawa K."/>
            <person name="Fujimori K."/>
            <person name="Tanai H."/>
            <person name="Kimata M."/>
            <person name="Watanabe M."/>
            <person name="Hiraoka S."/>
            <person name="Chiba Y."/>
            <person name="Ishida S."/>
            <person name="Ono Y."/>
            <person name="Takiguchi S."/>
            <person name="Watanabe S."/>
            <person name="Yosida M."/>
            <person name="Hotuta T."/>
            <person name="Kusano J."/>
            <person name="Kanehori K."/>
            <person name="Takahashi-Fujii A."/>
            <person name="Hara H."/>
            <person name="Tanase T.-O."/>
            <person name="Nomura Y."/>
            <person name="Togiya S."/>
            <person name="Komai F."/>
            <person name="Hara R."/>
            <person name="Takeuchi K."/>
            <person name="Arita M."/>
            <person name="Imose N."/>
            <person name="Musashino K."/>
            <person name="Yuuki H."/>
            <person name="Oshima A."/>
            <person name="Sasaki N."/>
            <person name="Aotsuka S."/>
            <person name="Yoshikawa Y."/>
            <person name="Matsunawa H."/>
            <person name="Ichihara T."/>
            <person name="Shiohata N."/>
            <person name="Sano S."/>
            <person name="Moriya S."/>
            <person name="Momiyama H."/>
            <person name="Satoh N."/>
            <person name="Takami S."/>
            <person name="Terashima Y."/>
            <person name="Suzuki O."/>
            <person name="Nakagawa S."/>
            <person name="Senoh A."/>
            <person name="Mizoguchi H."/>
            <person name="Goto Y."/>
            <person name="Shimizu F."/>
            <person name="Wakebe H."/>
            <person name="Hishigaki H."/>
            <person name="Watanabe T."/>
            <person name="Sugiyama A."/>
            <person name="Takemoto M."/>
            <person name="Kawakami B."/>
            <person name="Yamazaki M."/>
            <person name="Watanabe K."/>
            <person name="Kumagai A."/>
            <person name="Itakura S."/>
            <person name="Fukuzumi Y."/>
            <person name="Fujimori Y."/>
            <person name="Komiyama M."/>
            <person name="Tashiro H."/>
            <person name="Tanigami A."/>
            <person name="Fujiwara T."/>
            <person name="Ono T."/>
            <person name="Yamada K."/>
            <person name="Fujii Y."/>
            <person name="Ozaki K."/>
            <person name="Hirao M."/>
            <person name="Ohmori Y."/>
            <person name="Kawabata A."/>
            <person name="Hikiji T."/>
            <person name="Kobatake N."/>
            <person name="Inagaki H."/>
            <person name="Ikema Y."/>
            <person name="Okamoto S."/>
            <person name="Okitani R."/>
            <person name="Kawakami T."/>
            <person name="Noguchi S."/>
            <person name="Itoh T."/>
            <person name="Shigeta K."/>
            <person name="Senba T."/>
            <person name="Matsumura K."/>
            <person name="Nakajima Y."/>
            <person name="Mizuno T."/>
            <person name="Morinaga M."/>
            <person name="Sasaki M."/>
            <person name="Togashi T."/>
            <person name="Oyama M."/>
            <person name="Hata H."/>
            <person name="Watanabe M."/>
            <person name="Komatsu T."/>
            <person name="Mizushima-Sugano J."/>
            <person name="Satoh T."/>
            <person name="Shirai Y."/>
            <person name="Takahashi Y."/>
            <person name="Nakagawa K."/>
            <person name="Okumura K."/>
            <person name="Nagase T."/>
            <person name="Nomura N."/>
            <person name="Kikuchi H."/>
            <person name="Masuho Y."/>
            <person name="Yamashita R."/>
            <person name="Nakai K."/>
            <person name="Yada T."/>
            <person name="Nakamura Y."/>
            <person name="Ohara O."/>
            <person name="Isogai T."/>
            <person name="Sugano S."/>
        </authorList>
    </citation>
    <scope>NUCLEOTIDE SEQUENCE [LARGE SCALE MRNA] (ISOFORM 2)</scope>
    <source>
        <tissue>Cerebellum</tissue>
    </source>
</reference>
<reference key="2">
    <citation type="journal article" date="2003" name="Nature">
        <title>The DNA sequence and analysis of human chromosome 14.</title>
        <authorList>
            <person name="Heilig R."/>
            <person name="Eckenberg R."/>
            <person name="Petit J.-L."/>
            <person name="Fonknechten N."/>
            <person name="Da Silva C."/>
            <person name="Cattolico L."/>
            <person name="Levy M."/>
            <person name="Barbe V."/>
            <person name="De Berardinis V."/>
            <person name="Ureta-Vidal A."/>
            <person name="Pelletier E."/>
            <person name="Vico V."/>
            <person name="Anthouard V."/>
            <person name="Rowen L."/>
            <person name="Madan A."/>
            <person name="Qin S."/>
            <person name="Sun H."/>
            <person name="Du H."/>
            <person name="Pepin K."/>
            <person name="Artiguenave F."/>
            <person name="Robert C."/>
            <person name="Cruaud C."/>
            <person name="Bruels T."/>
            <person name="Jaillon O."/>
            <person name="Friedlander L."/>
            <person name="Samson G."/>
            <person name="Brottier P."/>
            <person name="Cure S."/>
            <person name="Segurens B."/>
            <person name="Aniere F."/>
            <person name="Samain S."/>
            <person name="Crespeau H."/>
            <person name="Abbasi N."/>
            <person name="Aiach N."/>
            <person name="Boscus D."/>
            <person name="Dickhoff R."/>
            <person name="Dors M."/>
            <person name="Dubois I."/>
            <person name="Friedman C."/>
            <person name="Gouyvenoux M."/>
            <person name="James R."/>
            <person name="Madan A."/>
            <person name="Mairey-Estrada B."/>
            <person name="Mangenot S."/>
            <person name="Martins N."/>
            <person name="Menard M."/>
            <person name="Oztas S."/>
            <person name="Ratcliffe A."/>
            <person name="Shaffer T."/>
            <person name="Trask B."/>
            <person name="Vacherie B."/>
            <person name="Bellemere C."/>
            <person name="Belser C."/>
            <person name="Besnard-Gonnet M."/>
            <person name="Bartol-Mavel D."/>
            <person name="Boutard M."/>
            <person name="Briez-Silla S."/>
            <person name="Combette S."/>
            <person name="Dufosse-Laurent V."/>
            <person name="Ferron C."/>
            <person name="Lechaplais C."/>
            <person name="Louesse C."/>
            <person name="Muselet D."/>
            <person name="Magdelenat G."/>
            <person name="Pateau E."/>
            <person name="Petit E."/>
            <person name="Sirvain-Trukniewicz P."/>
            <person name="Trybou A."/>
            <person name="Vega-Czarny N."/>
            <person name="Bataille E."/>
            <person name="Bluet E."/>
            <person name="Bordelais I."/>
            <person name="Dubois M."/>
            <person name="Dumont C."/>
            <person name="Guerin T."/>
            <person name="Haffray S."/>
            <person name="Hammadi R."/>
            <person name="Muanga J."/>
            <person name="Pellouin V."/>
            <person name="Robert D."/>
            <person name="Wunderle E."/>
            <person name="Gauguet G."/>
            <person name="Roy A."/>
            <person name="Sainte-Marthe L."/>
            <person name="Verdier J."/>
            <person name="Verdier-Discala C."/>
            <person name="Hillier L.W."/>
            <person name="Fulton L."/>
            <person name="McPherson J."/>
            <person name="Matsuda F."/>
            <person name="Wilson R."/>
            <person name="Scarpelli C."/>
            <person name="Gyapay G."/>
            <person name="Wincker P."/>
            <person name="Saurin W."/>
            <person name="Quetier F."/>
            <person name="Waterston R."/>
            <person name="Hood L."/>
            <person name="Weissenbach J."/>
        </authorList>
    </citation>
    <scope>NUCLEOTIDE SEQUENCE [LARGE SCALE GENOMIC DNA]</scope>
</reference>
<evidence type="ECO:0000255" key="1"/>
<evidence type="ECO:0000303" key="2">
    <source>
    </source>
</evidence>
<evidence type="ECO:0000305" key="3"/>
<gene>
    <name type="primary">TMEM179</name>
    <name type="synonym">C14orf90</name>
    <name type="synonym">TMEM179A</name>
</gene>